<proteinExistence type="inferred from homology"/>
<sequence length="615" mass="67884">MPIQVLPPQLANQIAAGEVVERPASVVKELVENSLDAGATRIDIDIERGGAKLIRIRDNGCGIKKDELALALARHATSKIASLDDLEAIISLGFRGEALASISSVSRLTLTSRTAEQQEAWQAYAEGRDMDVTVKPAAHPVGTTLEVLDLFYNTPARRKFLRTEKTEFNHIDEIIRRIALARFDVTISLSHNGKIVRQYRAVPEGGQKERRLGAICGTAFLEQALAIEWQHGDLTLRGWVADPNHTTPALAEIQYCYVNGRMMRDRLINHAIRQACEDKLGADQQPAFVLYLEIDPHQVDVNVHPAKHEVRFHQSRLVHDFIYQGVLSVLQQQLETPLPLDDEPQPAPRAIPENRVAAGRNHFAEPAVREPVAPRYSPAPASGSRPAASWPNAQPGYQKQQGEVYRQLLQTPAPMQKPKAPEPQEPALAANSQSFGRVLTIVHSDCALLERDGNISLLSLPVAERWLRQAQLTPGEVPVCAQPLLIPLRLKVSGEEKSALEKAQSALAELGIDFQSDAQHVTIRAVPLPLRQQNLQILIPELIGYLAKQSVFEPGNIAQWIARNLMSEHAQWSMAQAITLLADVERLCPQLVKTPPGGLLQSVDLHPAIKALKDE</sequence>
<feature type="chain" id="PRO_1000010013" description="DNA mismatch repair protein MutL">
    <location>
        <begin position="1"/>
        <end position="615"/>
    </location>
</feature>
<feature type="region of interest" description="Disordered" evidence="2">
    <location>
        <begin position="362"/>
        <end position="397"/>
    </location>
</feature>
<feature type="compositionally biased region" description="Low complexity" evidence="2">
    <location>
        <begin position="373"/>
        <end position="391"/>
    </location>
</feature>
<comment type="function">
    <text evidence="1">This protein is involved in the repair of mismatches in DNA. It is required for dam-dependent methyl-directed DNA mismatch repair. May act as a 'molecular matchmaker', a protein that promotes the formation of a stable complex between two or more DNA-binding proteins in an ATP-dependent manner without itself being part of a final effector complex.</text>
</comment>
<comment type="similarity">
    <text evidence="1">Belongs to the DNA mismatch repair MutL/HexB family.</text>
</comment>
<keyword id="KW-0227">DNA damage</keyword>
<keyword id="KW-0234">DNA repair</keyword>
<gene>
    <name evidence="1" type="primary">mutL</name>
    <name type="ordered locus">ECP_4415</name>
</gene>
<protein>
    <recommendedName>
        <fullName evidence="1">DNA mismatch repair protein MutL</fullName>
    </recommendedName>
</protein>
<reference key="1">
    <citation type="journal article" date="2006" name="Mol. Microbiol.">
        <title>Role of pathogenicity island-associated integrases in the genome plasticity of uropathogenic Escherichia coli strain 536.</title>
        <authorList>
            <person name="Hochhut B."/>
            <person name="Wilde C."/>
            <person name="Balling G."/>
            <person name="Middendorf B."/>
            <person name="Dobrindt U."/>
            <person name="Brzuszkiewicz E."/>
            <person name="Gottschalk G."/>
            <person name="Carniel E."/>
            <person name="Hacker J."/>
        </authorList>
    </citation>
    <scope>NUCLEOTIDE SEQUENCE [LARGE SCALE GENOMIC DNA]</scope>
    <source>
        <strain>536 / UPEC</strain>
    </source>
</reference>
<evidence type="ECO:0000255" key="1">
    <source>
        <dbReference type="HAMAP-Rule" id="MF_00149"/>
    </source>
</evidence>
<evidence type="ECO:0000256" key="2">
    <source>
        <dbReference type="SAM" id="MobiDB-lite"/>
    </source>
</evidence>
<accession>Q0T9M3</accession>
<organism>
    <name type="scientific">Escherichia coli O6:K15:H31 (strain 536 / UPEC)</name>
    <dbReference type="NCBI Taxonomy" id="362663"/>
    <lineage>
        <taxon>Bacteria</taxon>
        <taxon>Pseudomonadati</taxon>
        <taxon>Pseudomonadota</taxon>
        <taxon>Gammaproteobacteria</taxon>
        <taxon>Enterobacterales</taxon>
        <taxon>Enterobacteriaceae</taxon>
        <taxon>Escherichia</taxon>
    </lineage>
</organism>
<dbReference type="EMBL" id="CP000247">
    <property type="protein sequence ID" value="ABG72356.1"/>
    <property type="molecule type" value="Genomic_DNA"/>
</dbReference>
<dbReference type="RefSeq" id="WP_001298688.1">
    <property type="nucleotide sequence ID" value="NC_008253.1"/>
</dbReference>
<dbReference type="SMR" id="Q0T9M3"/>
<dbReference type="KEGG" id="ecp:ECP_4415"/>
<dbReference type="HOGENOM" id="CLU_004131_5_1_6"/>
<dbReference type="Proteomes" id="UP000009182">
    <property type="component" value="Chromosome"/>
</dbReference>
<dbReference type="GO" id="GO:0032300">
    <property type="term" value="C:mismatch repair complex"/>
    <property type="evidence" value="ECO:0007669"/>
    <property type="project" value="InterPro"/>
</dbReference>
<dbReference type="GO" id="GO:0005524">
    <property type="term" value="F:ATP binding"/>
    <property type="evidence" value="ECO:0007669"/>
    <property type="project" value="InterPro"/>
</dbReference>
<dbReference type="GO" id="GO:0016887">
    <property type="term" value="F:ATP hydrolysis activity"/>
    <property type="evidence" value="ECO:0007669"/>
    <property type="project" value="InterPro"/>
</dbReference>
<dbReference type="GO" id="GO:0140664">
    <property type="term" value="F:ATP-dependent DNA damage sensor activity"/>
    <property type="evidence" value="ECO:0007669"/>
    <property type="project" value="InterPro"/>
</dbReference>
<dbReference type="GO" id="GO:0030983">
    <property type="term" value="F:mismatched DNA binding"/>
    <property type="evidence" value="ECO:0007669"/>
    <property type="project" value="InterPro"/>
</dbReference>
<dbReference type="GO" id="GO:0006298">
    <property type="term" value="P:mismatch repair"/>
    <property type="evidence" value="ECO:0007669"/>
    <property type="project" value="UniProtKB-UniRule"/>
</dbReference>
<dbReference type="CDD" id="cd16926">
    <property type="entry name" value="HATPase_MutL-MLH-PMS-like"/>
    <property type="match status" value="1"/>
</dbReference>
<dbReference type="CDD" id="cd03482">
    <property type="entry name" value="MutL_Trans_MutL"/>
    <property type="match status" value="1"/>
</dbReference>
<dbReference type="FunFam" id="3.30.230.10:FF:000013">
    <property type="entry name" value="DNA mismatch repair endonuclease MutL"/>
    <property type="match status" value="1"/>
</dbReference>
<dbReference type="FunFam" id="3.30.565.10:FF:000003">
    <property type="entry name" value="DNA mismatch repair endonuclease MutL"/>
    <property type="match status" value="1"/>
</dbReference>
<dbReference type="FunFam" id="3.30.1370.100:FF:000002">
    <property type="entry name" value="DNA mismatch repair protein MutL"/>
    <property type="match status" value="1"/>
</dbReference>
<dbReference type="Gene3D" id="3.30.230.10">
    <property type="match status" value="1"/>
</dbReference>
<dbReference type="Gene3D" id="3.30.565.10">
    <property type="entry name" value="Histidine kinase-like ATPase, C-terminal domain"/>
    <property type="match status" value="1"/>
</dbReference>
<dbReference type="Gene3D" id="3.30.1540.20">
    <property type="entry name" value="MutL, C-terminal domain, dimerisation subdomain"/>
    <property type="match status" value="1"/>
</dbReference>
<dbReference type="Gene3D" id="3.30.1370.100">
    <property type="entry name" value="MutL, C-terminal domain, regulatory subdomain"/>
    <property type="match status" value="1"/>
</dbReference>
<dbReference type="HAMAP" id="MF_00149">
    <property type="entry name" value="DNA_mis_repair"/>
    <property type="match status" value="1"/>
</dbReference>
<dbReference type="InterPro" id="IPR014762">
    <property type="entry name" value="DNA_mismatch_repair_CS"/>
</dbReference>
<dbReference type="InterPro" id="IPR020667">
    <property type="entry name" value="DNA_mismatch_repair_MutL"/>
</dbReference>
<dbReference type="InterPro" id="IPR013507">
    <property type="entry name" value="DNA_mismatch_S5_2-like"/>
</dbReference>
<dbReference type="InterPro" id="IPR036890">
    <property type="entry name" value="HATPase_C_sf"/>
</dbReference>
<dbReference type="InterPro" id="IPR002099">
    <property type="entry name" value="MutL/Mlh/PMS"/>
</dbReference>
<dbReference type="InterPro" id="IPR038973">
    <property type="entry name" value="MutL/Mlh/Pms-like"/>
</dbReference>
<dbReference type="InterPro" id="IPR014790">
    <property type="entry name" value="MutL_C"/>
</dbReference>
<dbReference type="InterPro" id="IPR042120">
    <property type="entry name" value="MutL_C_dimsub"/>
</dbReference>
<dbReference type="InterPro" id="IPR042121">
    <property type="entry name" value="MutL_C_regsub"/>
</dbReference>
<dbReference type="InterPro" id="IPR037198">
    <property type="entry name" value="MutL_C_sf"/>
</dbReference>
<dbReference type="InterPro" id="IPR020568">
    <property type="entry name" value="Ribosomal_Su5_D2-typ_SF"/>
</dbReference>
<dbReference type="InterPro" id="IPR014721">
    <property type="entry name" value="Ribsml_uS5_D2-typ_fold_subgr"/>
</dbReference>
<dbReference type="NCBIfam" id="TIGR00585">
    <property type="entry name" value="mutl"/>
    <property type="match status" value="1"/>
</dbReference>
<dbReference type="NCBIfam" id="NF000948">
    <property type="entry name" value="PRK00095.1-1"/>
    <property type="match status" value="1"/>
</dbReference>
<dbReference type="PANTHER" id="PTHR10073">
    <property type="entry name" value="DNA MISMATCH REPAIR PROTEIN MLH, PMS, MUTL"/>
    <property type="match status" value="1"/>
</dbReference>
<dbReference type="PANTHER" id="PTHR10073:SF12">
    <property type="entry name" value="DNA MISMATCH REPAIR PROTEIN MLH1"/>
    <property type="match status" value="1"/>
</dbReference>
<dbReference type="Pfam" id="PF01119">
    <property type="entry name" value="DNA_mis_repair"/>
    <property type="match status" value="1"/>
</dbReference>
<dbReference type="Pfam" id="PF13589">
    <property type="entry name" value="HATPase_c_3"/>
    <property type="match status" value="1"/>
</dbReference>
<dbReference type="Pfam" id="PF08676">
    <property type="entry name" value="MutL_C"/>
    <property type="match status" value="1"/>
</dbReference>
<dbReference type="SMART" id="SM01340">
    <property type="entry name" value="DNA_mis_repair"/>
    <property type="match status" value="1"/>
</dbReference>
<dbReference type="SMART" id="SM00853">
    <property type="entry name" value="MutL_C"/>
    <property type="match status" value="1"/>
</dbReference>
<dbReference type="SUPFAM" id="SSF55874">
    <property type="entry name" value="ATPase domain of HSP90 chaperone/DNA topoisomerase II/histidine kinase"/>
    <property type="match status" value="1"/>
</dbReference>
<dbReference type="SUPFAM" id="SSF118116">
    <property type="entry name" value="DNA mismatch repair protein MutL"/>
    <property type="match status" value="1"/>
</dbReference>
<dbReference type="SUPFAM" id="SSF54211">
    <property type="entry name" value="Ribosomal protein S5 domain 2-like"/>
    <property type="match status" value="1"/>
</dbReference>
<dbReference type="PROSITE" id="PS00058">
    <property type="entry name" value="DNA_MISMATCH_REPAIR_1"/>
    <property type="match status" value="1"/>
</dbReference>
<name>MUTL_ECOL5</name>